<evidence type="ECO:0000255" key="1">
    <source>
        <dbReference type="HAMAP-Rule" id="MF_01310"/>
    </source>
</evidence>
<evidence type="ECO:0000305" key="2"/>
<keyword id="KW-0687">Ribonucleoprotein</keyword>
<keyword id="KW-0689">Ribosomal protein</keyword>
<keyword id="KW-0694">RNA-binding</keyword>
<keyword id="KW-0699">rRNA-binding</keyword>
<reference key="1">
    <citation type="journal article" date="2008" name="J. Bacteriol.">
        <title>The complete genome sequence of Escherichia coli DH10B: insights into the biology of a laboratory workhorse.</title>
        <authorList>
            <person name="Durfee T."/>
            <person name="Nelson R."/>
            <person name="Baldwin S."/>
            <person name="Plunkett G. III"/>
            <person name="Burland V."/>
            <person name="Mau B."/>
            <person name="Petrosino J.F."/>
            <person name="Qin X."/>
            <person name="Muzny D.M."/>
            <person name="Ayele M."/>
            <person name="Gibbs R.A."/>
            <person name="Csorgo B."/>
            <person name="Posfai G."/>
            <person name="Weinstock G.M."/>
            <person name="Blattner F.R."/>
        </authorList>
    </citation>
    <scope>NUCLEOTIDE SEQUENCE [LARGE SCALE GENOMIC DNA]</scope>
    <source>
        <strain>K12 / DH10B</strain>
    </source>
</reference>
<gene>
    <name evidence="1" type="primary">rpsK</name>
    <name type="ordered locus">ECDH10B_3472</name>
</gene>
<accession>B1X6E9</accession>
<name>RS11_ECODH</name>
<dbReference type="EMBL" id="CP000948">
    <property type="protein sequence ID" value="ACB04359.1"/>
    <property type="molecule type" value="Genomic_DNA"/>
</dbReference>
<dbReference type="RefSeq" id="WP_001029684.1">
    <property type="nucleotide sequence ID" value="NC_010473.1"/>
</dbReference>
<dbReference type="SMR" id="B1X6E9"/>
<dbReference type="GeneID" id="93778690"/>
<dbReference type="KEGG" id="ecd:ECDH10B_3472"/>
<dbReference type="HOGENOM" id="CLU_072439_5_0_6"/>
<dbReference type="GO" id="GO:1990904">
    <property type="term" value="C:ribonucleoprotein complex"/>
    <property type="evidence" value="ECO:0007669"/>
    <property type="project" value="UniProtKB-KW"/>
</dbReference>
<dbReference type="GO" id="GO:0005840">
    <property type="term" value="C:ribosome"/>
    <property type="evidence" value="ECO:0007669"/>
    <property type="project" value="UniProtKB-KW"/>
</dbReference>
<dbReference type="GO" id="GO:0019843">
    <property type="term" value="F:rRNA binding"/>
    <property type="evidence" value="ECO:0007669"/>
    <property type="project" value="UniProtKB-UniRule"/>
</dbReference>
<dbReference type="GO" id="GO:0003735">
    <property type="term" value="F:structural constituent of ribosome"/>
    <property type="evidence" value="ECO:0007669"/>
    <property type="project" value="InterPro"/>
</dbReference>
<dbReference type="GO" id="GO:0006412">
    <property type="term" value="P:translation"/>
    <property type="evidence" value="ECO:0007669"/>
    <property type="project" value="UniProtKB-UniRule"/>
</dbReference>
<dbReference type="FunFam" id="3.30.420.80:FF:000001">
    <property type="entry name" value="30S ribosomal protein S11"/>
    <property type="match status" value="1"/>
</dbReference>
<dbReference type="Gene3D" id="3.30.420.80">
    <property type="entry name" value="Ribosomal protein S11"/>
    <property type="match status" value="1"/>
</dbReference>
<dbReference type="HAMAP" id="MF_01310">
    <property type="entry name" value="Ribosomal_uS11"/>
    <property type="match status" value="1"/>
</dbReference>
<dbReference type="InterPro" id="IPR001971">
    <property type="entry name" value="Ribosomal_uS11"/>
</dbReference>
<dbReference type="InterPro" id="IPR019981">
    <property type="entry name" value="Ribosomal_uS11_bac-type"/>
</dbReference>
<dbReference type="InterPro" id="IPR018102">
    <property type="entry name" value="Ribosomal_uS11_CS"/>
</dbReference>
<dbReference type="InterPro" id="IPR036967">
    <property type="entry name" value="Ribosomal_uS11_sf"/>
</dbReference>
<dbReference type="NCBIfam" id="NF003698">
    <property type="entry name" value="PRK05309.1"/>
    <property type="match status" value="1"/>
</dbReference>
<dbReference type="NCBIfam" id="TIGR03632">
    <property type="entry name" value="uS11_bact"/>
    <property type="match status" value="1"/>
</dbReference>
<dbReference type="PANTHER" id="PTHR11759">
    <property type="entry name" value="40S RIBOSOMAL PROTEIN S14/30S RIBOSOMAL PROTEIN S11"/>
    <property type="match status" value="1"/>
</dbReference>
<dbReference type="Pfam" id="PF00411">
    <property type="entry name" value="Ribosomal_S11"/>
    <property type="match status" value="1"/>
</dbReference>
<dbReference type="PIRSF" id="PIRSF002131">
    <property type="entry name" value="Ribosomal_S11"/>
    <property type="match status" value="1"/>
</dbReference>
<dbReference type="SUPFAM" id="SSF53137">
    <property type="entry name" value="Translational machinery components"/>
    <property type="match status" value="1"/>
</dbReference>
<dbReference type="PROSITE" id="PS00054">
    <property type="entry name" value="RIBOSOMAL_S11"/>
    <property type="match status" value="1"/>
</dbReference>
<feature type="chain" id="PRO_1000141091" description="Small ribosomal subunit protein uS11">
    <location>
        <begin position="1"/>
        <end position="129"/>
    </location>
</feature>
<proteinExistence type="inferred from homology"/>
<organism>
    <name type="scientific">Escherichia coli (strain K12 / DH10B)</name>
    <dbReference type="NCBI Taxonomy" id="316385"/>
    <lineage>
        <taxon>Bacteria</taxon>
        <taxon>Pseudomonadati</taxon>
        <taxon>Pseudomonadota</taxon>
        <taxon>Gammaproteobacteria</taxon>
        <taxon>Enterobacterales</taxon>
        <taxon>Enterobacteriaceae</taxon>
        <taxon>Escherichia</taxon>
    </lineage>
</organism>
<comment type="function">
    <text evidence="1">Located on the platform of the 30S subunit, it bridges several disparate RNA helices of the 16S rRNA. Forms part of the Shine-Dalgarno cleft in the 70S ribosome.</text>
</comment>
<comment type="subunit">
    <text evidence="1">Part of the 30S ribosomal subunit. Interacts with proteins S7 and S18. Binds to IF-3.</text>
</comment>
<comment type="similarity">
    <text evidence="1">Belongs to the universal ribosomal protein uS11 family.</text>
</comment>
<protein>
    <recommendedName>
        <fullName evidence="1">Small ribosomal subunit protein uS11</fullName>
    </recommendedName>
    <alternativeName>
        <fullName evidence="2">30S ribosomal protein S11</fullName>
    </alternativeName>
</protein>
<sequence length="129" mass="13845">MAKAPIRARKRVRKQVSDGVAHIHASFNNTIVTITDRQGNALGWATAGGSGFRGSRKSTPFAAQVAAERCADAVKEYGIKNLEVMVKGPGPGRESTIRALNAAGFRITNITDVTPIPHNGCRPPKKRRV</sequence>